<name>NXPH3_MACMU</name>
<accession>Q8WMJ4</accession>
<comment type="function">
    <text evidence="1">May be signaling molecules that resemble neuropeptides. Ligand for alpha-neurexins (By similarity).</text>
</comment>
<comment type="subcellular location">
    <subcellularLocation>
        <location evidence="3">Secreted</location>
    </subcellularLocation>
</comment>
<comment type="similarity">
    <text evidence="3">Belongs to the neurexophilin family.</text>
</comment>
<reference key="1">
    <citation type="submission" date="2001-09" db="EMBL/GenBank/DDBJ databases">
        <authorList>
            <person name="Brown A.E."/>
            <person name="Ojeda S.R."/>
        </authorList>
    </citation>
    <scope>NUCLEOTIDE SEQUENCE [MRNA]</scope>
    <source>
        <tissue>Hypothalamus</tissue>
    </source>
</reference>
<proteinExistence type="evidence at transcript level"/>
<dbReference type="EMBL" id="AF424823">
    <property type="protein sequence ID" value="AAL40239.1"/>
    <property type="molecule type" value="mRNA"/>
</dbReference>
<dbReference type="STRING" id="9544.ENSMMUP00000004505"/>
<dbReference type="GlyCosmos" id="Q8WMJ4">
    <property type="glycosylation" value="2 sites, No reported glycans"/>
</dbReference>
<dbReference type="PaxDb" id="9544-ENSMMUP00000004505"/>
<dbReference type="eggNOG" id="ENOG502QSZ5">
    <property type="taxonomic scope" value="Eukaryota"/>
</dbReference>
<dbReference type="InParanoid" id="Q8WMJ4"/>
<dbReference type="Proteomes" id="UP000006718">
    <property type="component" value="Unassembled WGS sequence"/>
</dbReference>
<dbReference type="GO" id="GO:0005576">
    <property type="term" value="C:extracellular region"/>
    <property type="evidence" value="ECO:0007669"/>
    <property type="project" value="UniProtKB-SubCell"/>
</dbReference>
<dbReference type="InterPro" id="IPR010450">
    <property type="entry name" value="Nxph"/>
</dbReference>
<dbReference type="InterPro" id="IPR026845">
    <property type="entry name" value="NXPH/NXPE"/>
</dbReference>
<dbReference type="PANTHER" id="PTHR17103">
    <property type="entry name" value="NEUREXOPHILIN"/>
    <property type="match status" value="1"/>
</dbReference>
<dbReference type="PANTHER" id="PTHR17103:SF14">
    <property type="entry name" value="NEUREXOPHILIN-3"/>
    <property type="match status" value="1"/>
</dbReference>
<dbReference type="Pfam" id="PF06312">
    <property type="entry name" value="Neurexophilin"/>
    <property type="match status" value="1"/>
</dbReference>
<organism>
    <name type="scientific">Macaca mulatta</name>
    <name type="common">Rhesus macaque</name>
    <dbReference type="NCBI Taxonomy" id="9544"/>
    <lineage>
        <taxon>Eukaryota</taxon>
        <taxon>Metazoa</taxon>
        <taxon>Chordata</taxon>
        <taxon>Craniata</taxon>
        <taxon>Vertebrata</taxon>
        <taxon>Euteleostomi</taxon>
        <taxon>Mammalia</taxon>
        <taxon>Eutheria</taxon>
        <taxon>Euarchontoglires</taxon>
        <taxon>Primates</taxon>
        <taxon>Haplorrhini</taxon>
        <taxon>Catarrhini</taxon>
        <taxon>Cercopithecidae</taxon>
        <taxon>Cercopithecinae</taxon>
        <taxon>Macaca</taxon>
    </lineage>
</organism>
<evidence type="ECO:0000250" key="1"/>
<evidence type="ECO:0000255" key="2"/>
<evidence type="ECO:0000305" key="3"/>
<keyword id="KW-0325">Glycoprotein</keyword>
<keyword id="KW-1185">Reference proteome</keyword>
<keyword id="KW-0964">Secreted</keyword>
<protein>
    <recommendedName>
        <fullName>Neurexophilin-3</fullName>
    </recommendedName>
</protein>
<feature type="chain" id="PRO_0000160257" description="Neurexophilin-3">
    <location>
        <begin position="1" status="less than"/>
        <end position="95" status="greater than"/>
    </location>
</feature>
<feature type="region of interest" description="III">
    <location>
        <begin position="1" status="less than"/>
        <end position="21"/>
    </location>
</feature>
<feature type="region of interest" description="IV (linker domain)">
    <location>
        <begin position="22"/>
        <end position="30"/>
    </location>
</feature>
<feature type="region of interest" description="V (Cys-rich)">
    <location>
        <begin position="31"/>
        <end position="95" status="greater than"/>
    </location>
</feature>
<feature type="glycosylation site" description="N-linked (GlcNAc...) asparagine" evidence="2">
    <location>
        <position position="1"/>
    </location>
</feature>
<feature type="glycosylation site" description="N-linked (GlcNAc...) asparagine" evidence="2">
    <location>
        <position position="7"/>
    </location>
</feature>
<feature type="non-terminal residue">
    <location>
        <position position="1"/>
    </location>
</feature>
<feature type="non-terminal residue">
    <location>
        <position position="95"/>
    </location>
</feature>
<sequence length="95" mass="10763">NATGQGNISISLVPPSKAVEXHQXQQIFIEAKASKIFNCRMEWEKVERGRRTSLCTHDPAKICSRDHAQSSATWSCSQPFKVVCVYIAFYSTDYR</sequence>
<gene>
    <name type="primary">NXPH3</name>
</gene>